<feature type="chain" id="PRO_1000065008" description="tRNA 5-methylaminomethyl-2-thiouridine biosynthesis bifunctional protein MnmC">
    <location>
        <begin position="1"/>
        <end position="665"/>
    </location>
</feature>
<feature type="region of interest" description="tRNA (mnm(5)s(2)U34)-methyltransferase">
    <location>
        <begin position="1"/>
        <end position="235"/>
    </location>
</feature>
<feature type="region of interest" description="FAD-dependent cmnm(5)s(2)U34 oxidoreductase">
    <location>
        <begin position="266"/>
        <end position="665"/>
    </location>
</feature>
<keyword id="KW-0963">Cytoplasm</keyword>
<keyword id="KW-0274">FAD</keyword>
<keyword id="KW-0285">Flavoprotein</keyword>
<keyword id="KW-0489">Methyltransferase</keyword>
<keyword id="KW-0511">Multifunctional enzyme</keyword>
<keyword id="KW-0560">Oxidoreductase</keyword>
<keyword id="KW-0949">S-adenosyl-L-methionine</keyword>
<keyword id="KW-0808">Transferase</keyword>
<keyword id="KW-0819">tRNA processing</keyword>
<dbReference type="EC" id="2.1.1.61" evidence="1"/>
<dbReference type="EC" id="1.5.-.-" evidence="1"/>
<dbReference type="EMBL" id="CP000075">
    <property type="protein sequence ID" value="AAY38773.1"/>
    <property type="molecule type" value="Genomic_DNA"/>
</dbReference>
<dbReference type="RefSeq" id="WP_011268624.1">
    <property type="nucleotide sequence ID" value="NC_007005.1"/>
</dbReference>
<dbReference type="RefSeq" id="YP_236811.1">
    <property type="nucleotide sequence ID" value="NC_007005.1"/>
</dbReference>
<dbReference type="SMR" id="Q4ZPZ9"/>
<dbReference type="STRING" id="205918.Psyr_3742"/>
<dbReference type="KEGG" id="psb:Psyr_3742"/>
<dbReference type="PATRIC" id="fig|205918.7.peg.3842"/>
<dbReference type="eggNOG" id="COG0665">
    <property type="taxonomic scope" value="Bacteria"/>
</dbReference>
<dbReference type="eggNOG" id="COG4121">
    <property type="taxonomic scope" value="Bacteria"/>
</dbReference>
<dbReference type="HOGENOM" id="CLU_022427_1_0_6"/>
<dbReference type="OrthoDB" id="9786494at2"/>
<dbReference type="Proteomes" id="UP000000426">
    <property type="component" value="Chromosome"/>
</dbReference>
<dbReference type="GO" id="GO:0005737">
    <property type="term" value="C:cytoplasm"/>
    <property type="evidence" value="ECO:0007669"/>
    <property type="project" value="UniProtKB-SubCell"/>
</dbReference>
<dbReference type="GO" id="GO:0050660">
    <property type="term" value="F:flavin adenine dinucleotide binding"/>
    <property type="evidence" value="ECO:0007669"/>
    <property type="project" value="UniProtKB-UniRule"/>
</dbReference>
<dbReference type="GO" id="GO:0016645">
    <property type="term" value="F:oxidoreductase activity, acting on the CH-NH group of donors"/>
    <property type="evidence" value="ECO:0007669"/>
    <property type="project" value="InterPro"/>
</dbReference>
<dbReference type="GO" id="GO:0004808">
    <property type="term" value="F:tRNA (5-methylaminomethyl-2-thiouridylate)(34)-methyltransferase activity"/>
    <property type="evidence" value="ECO:0007669"/>
    <property type="project" value="UniProtKB-EC"/>
</dbReference>
<dbReference type="GO" id="GO:0032259">
    <property type="term" value="P:methylation"/>
    <property type="evidence" value="ECO:0007669"/>
    <property type="project" value="UniProtKB-KW"/>
</dbReference>
<dbReference type="GO" id="GO:0002098">
    <property type="term" value="P:tRNA wobble uridine modification"/>
    <property type="evidence" value="ECO:0007669"/>
    <property type="project" value="TreeGrafter"/>
</dbReference>
<dbReference type="Gene3D" id="3.30.9.10">
    <property type="entry name" value="D-Amino Acid Oxidase, subunit A, domain 2"/>
    <property type="match status" value="1"/>
</dbReference>
<dbReference type="Gene3D" id="3.50.50.60">
    <property type="entry name" value="FAD/NAD(P)-binding domain"/>
    <property type="match status" value="1"/>
</dbReference>
<dbReference type="Gene3D" id="3.40.50.150">
    <property type="entry name" value="Vaccinia Virus protein VP39"/>
    <property type="match status" value="1"/>
</dbReference>
<dbReference type="HAMAP" id="MF_01102">
    <property type="entry name" value="MnmC"/>
    <property type="match status" value="1"/>
</dbReference>
<dbReference type="InterPro" id="IPR006076">
    <property type="entry name" value="FAD-dep_OxRdtase"/>
</dbReference>
<dbReference type="InterPro" id="IPR036188">
    <property type="entry name" value="FAD/NAD-bd_sf"/>
</dbReference>
<dbReference type="InterPro" id="IPR008471">
    <property type="entry name" value="MnmC-like_methylTransf"/>
</dbReference>
<dbReference type="InterPro" id="IPR029063">
    <property type="entry name" value="SAM-dependent_MTases_sf"/>
</dbReference>
<dbReference type="InterPro" id="IPR023032">
    <property type="entry name" value="tRNA_MAMT_biosynth_bifunc_MnmC"/>
</dbReference>
<dbReference type="InterPro" id="IPR047785">
    <property type="entry name" value="tRNA_MNMC2"/>
</dbReference>
<dbReference type="InterPro" id="IPR017610">
    <property type="entry name" value="tRNA_S-uridine_synth_MnmC_C"/>
</dbReference>
<dbReference type="NCBIfam" id="TIGR03197">
    <property type="entry name" value="MnmC_Cterm"/>
    <property type="match status" value="1"/>
</dbReference>
<dbReference type="NCBIfam" id="NF002481">
    <property type="entry name" value="PRK01747.1-2"/>
    <property type="match status" value="1"/>
</dbReference>
<dbReference type="NCBIfam" id="NF033855">
    <property type="entry name" value="tRNA_MNMC2"/>
    <property type="match status" value="1"/>
</dbReference>
<dbReference type="PANTHER" id="PTHR13847">
    <property type="entry name" value="SARCOSINE DEHYDROGENASE-RELATED"/>
    <property type="match status" value="1"/>
</dbReference>
<dbReference type="PANTHER" id="PTHR13847:SF283">
    <property type="entry name" value="TRNA 5-METHYLAMINOMETHYL-2-THIOURIDINE BIOSYNTHESIS BIFUNCTIONAL PROTEIN MNMC"/>
    <property type="match status" value="1"/>
</dbReference>
<dbReference type="Pfam" id="PF01266">
    <property type="entry name" value="DAO"/>
    <property type="match status" value="1"/>
</dbReference>
<dbReference type="Pfam" id="PF05430">
    <property type="entry name" value="Methyltransf_30"/>
    <property type="match status" value="1"/>
</dbReference>
<dbReference type="SUPFAM" id="SSF51905">
    <property type="entry name" value="FAD/NAD(P)-binding domain"/>
    <property type="match status" value="1"/>
</dbReference>
<sequence length="665" mass="72739">MTITRHAQIDWDEHGNPRSRDFSDVYFSTESGLEETRHVFLVQNDLRRRFTELQDGGRLIIGETGFGTGLNFLCAWQLFDECAPANARLQFVSVEKYPLSHADLQRALALWPELSPFAGQLLDQYVAVHEGFQRLVFAGGRVTLTLLIGDALQMLPQLDGQMDAWFLDGFAPAKNPEMWTPELFAELARLSTSSTTIGTFTSTGWVRRSLNAAGFKMKRVPGIGHKWEVLRGTFIAWPEDVAHPPAAKPWLARPAPIGGERKALVIGAGLAGCATAQSLAQRGWQVSLLERHAAPAQEASGNPQGVLYLKLSAHGTALSQLILSGFGHTRRLLERLQRGVDWDACGVLQLTFDDKEALRQKQLADAFPESLLHLLDKPAAEAQSGVALNSGGLFYPEGGWVHPPALCHAQAAHANIRLIAHQQALELRRVDDQWQVWSEEQLVDSAPVVVLAGAADIQQFSQSADLPLKRIRGQITRLPQTQASTALRSVVCAEGYVAPARLGEHTLGASFDFNSTDLTPNLADHLDNLGLLREISEDLTSRLDTADLSPEQLQGRAAFRCTSPDYLPIVGPLADREAFMQAYAALGKDARQVPDITCPWLDGLYVNSGHGSRGLITAPLCGELIAAWLDNEPLPLPRSVAEACHPNRFALRGLIRGKGKQTVGH</sequence>
<organism>
    <name type="scientific">Pseudomonas syringae pv. syringae (strain B728a)</name>
    <dbReference type="NCBI Taxonomy" id="205918"/>
    <lineage>
        <taxon>Bacteria</taxon>
        <taxon>Pseudomonadati</taxon>
        <taxon>Pseudomonadota</taxon>
        <taxon>Gammaproteobacteria</taxon>
        <taxon>Pseudomonadales</taxon>
        <taxon>Pseudomonadaceae</taxon>
        <taxon>Pseudomonas</taxon>
        <taxon>Pseudomonas syringae</taxon>
    </lineage>
</organism>
<protein>
    <recommendedName>
        <fullName evidence="1">tRNA 5-methylaminomethyl-2-thiouridine biosynthesis bifunctional protein MnmC</fullName>
        <shortName evidence="1">tRNA mnm(5)s(2)U biosynthesis bifunctional protein</shortName>
    </recommendedName>
    <domain>
        <recommendedName>
            <fullName evidence="1">tRNA (mnm(5)s(2)U34)-methyltransferase</fullName>
            <ecNumber evidence="1">2.1.1.61</ecNumber>
        </recommendedName>
    </domain>
    <domain>
        <recommendedName>
            <fullName evidence="1">FAD-dependent cmnm(5)s(2)U34 oxidoreductase</fullName>
            <ecNumber evidence="1">1.5.-.-</ecNumber>
        </recommendedName>
    </domain>
</protein>
<comment type="function">
    <text evidence="1">Catalyzes the last two steps in the biosynthesis of 5-methylaminomethyl-2-thiouridine (mnm(5)s(2)U) at the wobble position (U34) in tRNA. Catalyzes the FAD-dependent demodification of cmnm(5)s(2)U34 to nm(5)s(2)U34, followed by the transfer of a methyl group from S-adenosyl-L-methionine to nm(5)s(2)U34, to form mnm(5)s(2)U34.</text>
</comment>
<comment type="catalytic activity">
    <reaction evidence="1">
        <text>5-aminomethyl-2-thiouridine(34) in tRNA + S-adenosyl-L-methionine = 5-methylaminomethyl-2-thiouridine(34) in tRNA + S-adenosyl-L-homocysteine + H(+)</text>
        <dbReference type="Rhea" id="RHEA:19569"/>
        <dbReference type="Rhea" id="RHEA-COMP:10195"/>
        <dbReference type="Rhea" id="RHEA-COMP:10197"/>
        <dbReference type="ChEBI" id="CHEBI:15378"/>
        <dbReference type="ChEBI" id="CHEBI:57856"/>
        <dbReference type="ChEBI" id="CHEBI:59789"/>
        <dbReference type="ChEBI" id="CHEBI:74454"/>
        <dbReference type="ChEBI" id="CHEBI:74455"/>
        <dbReference type="EC" id="2.1.1.61"/>
    </reaction>
</comment>
<comment type="cofactor">
    <cofactor evidence="1">
        <name>FAD</name>
        <dbReference type="ChEBI" id="CHEBI:57692"/>
    </cofactor>
</comment>
<comment type="subcellular location">
    <subcellularLocation>
        <location evidence="1">Cytoplasm</location>
    </subcellularLocation>
</comment>
<comment type="similarity">
    <text evidence="1">In the N-terminal section; belongs to the methyltransferase superfamily. tRNA (mnm(5)s(2)U34)-methyltransferase family.</text>
</comment>
<comment type="similarity">
    <text evidence="1">In the C-terminal section; belongs to the DAO family.</text>
</comment>
<evidence type="ECO:0000255" key="1">
    <source>
        <dbReference type="HAMAP-Rule" id="MF_01102"/>
    </source>
</evidence>
<gene>
    <name evidence="1" type="primary">mnmC</name>
    <name type="ordered locus">Psyr_3742</name>
</gene>
<accession>Q4ZPZ9</accession>
<reference key="1">
    <citation type="journal article" date="2005" name="Proc. Natl. Acad. Sci. U.S.A.">
        <title>Comparison of the complete genome sequences of Pseudomonas syringae pv. syringae B728a and pv. tomato DC3000.</title>
        <authorList>
            <person name="Feil H."/>
            <person name="Feil W.S."/>
            <person name="Chain P."/>
            <person name="Larimer F."/>
            <person name="Dibartolo G."/>
            <person name="Copeland A."/>
            <person name="Lykidis A."/>
            <person name="Trong S."/>
            <person name="Nolan M."/>
            <person name="Goltsman E."/>
            <person name="Thiel J."/>
            <person name="Malfatti S."/>
            <person name="Loper J.E."/>
            <person name="Lapidus A."/>
            <person name="Detter J.C."/>
            <person name="Land M."/>
            <person name="Richardson P.M."/>
            <person name="Kyrpides N.C."/>
            <person name="Ivanova N."/>
            <person name="Lindow S.E."/>
        </authorList>
    </citation>
    <scope>NUCLEOTIDE SEQUENCE [LARGE SCALE GENOMIC DNA]</scope>
    <source>
        <strain>B728a</strain>
    </source>
</reference>
<name>MNMC_PSEU2</name>
<proteinExistence type="inferred from homology"/>